<keyword id="KW-0067">ATP-binding</keyword>
<keyword id="KW-0963">Cytoplasm</keyword>
<keyword id="KW-0324">Glycolysis</keyword>
<keyword id="KW-0418">Kinase</keyword>
<keyword id="KW-0547">Nucleotide-binding</keyword>
<keyword id="KW-0597">Phosphoprotein</keyword>
<keyword id="KW-0808">Transferase</keyword>
<evidence type="ECO:0000255" key="1">
    <source>
        <dbReference type="HAMAP-Rule" id="MF_00145"/>
    </source>
</evidence>
<accession>A9VQ51</accession>
<comment type="catalytic activity">
    <reaction evidence="1">
        <text>(2R)-3-phosphoglycerate + ATP = (2R)-3-phospho-glyceroyl phosphate + ADP</text>
        <dbReference type="Rhea" id="RHEA:14801"/>
        <dbReference type="ChEBI" id="CHEBI:30616"/>
        <dbReference type="ChEBI" id="CHEBI:57604"/>
        <dbReference type="ChEBI" id="CHEBI:58272"/>
        <dbReference type="ChEBI" id="CHEBI:456216"/>
        <dbReference type="EC" id="2.7.2.3"/>
    </reaction>
</comment>
<comment type="pathway">
    <text evidence="1">Carbohydrate degradation; glycolysis; pyruvate from D-glyceraldehyde 3-phosphate: step 2/5.</text>
</comment>
<comment type="subunit">
    <text evidence="1">Monomer.</text>
</comment>
<comment type="subcellular location">
    <subcellularLocation>
        <location evidence="1">Cytoplasm</location>
    </subcellularLocation>
</comment>
<comment type="similarity">
    <text evidence="1">Belongs to the phosphoglycerate kinase family.</text>
</comment>
<proteinExistence type="inferred from homology"/>
<gene>
    <name evidence="1" type="primary">pgk</name>
    <name type="ordered locus">BcerKBAB4_4930</name>
</gene>
<feature type="chain" id="PRO_1000096321" description="Phosphoglycerate kinase">
    <location>
        <begin position="1"/>
        <end position="394"/>
    </location>
</feature>
<feature type="binding site" evidence="1">
    <location>
        <begin position="21"/>
        <end position="23"/>
    </location>
    <ligand>
        <name>substrate</name>
    </ligand>
</feature>
<feature type="binding site" evidence="1">
    <location>
        <position position="36"/>
    </location>
    <ligand>
        <name>substrate</name>
    </ligand>
</feature>
<feature type="binding site" evidence="1">
    <location>
        <begin position="59"/>
        <end position="62"/>
    </location>
    <ligand>
        <name>substrate</name>
    </ligand>
</feature>
<feature type="binding site" evidence="1">
    <location>
        <position position="118"/>
    </location>
    <ligand>
        <name>substrate</name>
    </ligand>
</feature>
<feature type="binding site" evidence="1">
    <location>
        <position position="151"/>
    </location>
    <ligand>
        <name>substrate</name>
    </ligand>
</feature>
<feature type="binding site" evidence="1">
    <location>
        <position position="201"/>
    </location>
    <ligand>
        <name>ATP</name>
        <dbReference type="ChEBI" id="CHEBI:30616"/>
    </ligand>
</feature>
<feature type="binding site" evidence="1">
    <location>
        <position position="292"/>
    </location>
    <ligand>
        <name>ATP</name>
        <dbReference type="ChEBI" id="CHEBI:30616"/>
    </ligand>
</feature>
<feature type="binding site" evidence="1">
    <location>
        <position position="323"/>
    </location>
    <ligand>
        <name>ATP</name>
        <dbReference type="ChEBI" id="CHEBI:30616"/>
    </ligand>
</feature>
<feature type="binding site" evidence="1">
    <location>
        <begin position="350"/>
        <end position="353"/>
    </location>
    <ligand>
        <name>ATP</name>
        <dbReference type="ChEBI" id="CHEBI:30616"/>
    </ligand>
</feature>
<feature type="modified residue" description="Phosphoserine" evidence="1">
    <location>
        <position position="183"/>
    </location>
</feature>
<feature type="modified residue" description="Phosphothreonine" evidence="1">
    <location>
        <position position="299"/>
    </location>
</feature>
<organism>
    <name type="scientific">Bacillus mycoides (strain KBAB4)</name>
    <name type="common">Bacillus weihenstephanensis</name>
    <dbReference type="NCBI Taxonomy" id="315730"/>
    <lineage>
        <taxon>Bacteria</taxon>
        <taxon>Bacillati</taxon>
        <taxon>Bacillota</taxon>
        <taxon>Bacilli</taxon>
        <taxon>Bacillales</taxon>
        <taxon>Bacillaceae</taxon>
        <taxon>Bacillus</taxon>
        <taxon>Bacillus cereus group</taxon>
    </lineage>
</organism>
<dbReference type="EC" id="2.7.2.3" evidence="1"/>
<dbReference type="EMBL" id="CP000903">
    <property type="protein sequence ID" value="ABY46078.1"/>
    <property type="molecule type" value="Genomic_DNA"/>
</dbReference>
<dbReference type="RefSeq" id="WP_002016070.1">
    <property type="nucleotide sequence ID" value="NC_010184.1"/>
</dbReference>
<dbReference type="KEGG" id="bwe:BcerKBAB4_4930"/>
<dbReference type="eggNOG" id="COG0126">
    <property type="taxonomic scope" value="Bacteria"/>
</dbReference>
<dbReference type="HOGENOM" id="CLU_025427_0_2_9"/>
<dbReference type="UniPathway" id="UPA00109">
    <property type="reaction ID" value="UER00185"/>
</dbReference>
<dbReference type="Proteomes" id="UP000002154">
    <property type="component" value="Chromosome"/>
</dbReference>
<dbReference type="GO" id="GO:0005829">
    <property type="term" value="C:cytosol"/>
    <property type="evidence" value="ECO:0007669"/>
    <property type="project" value="TreeGrafter"/>
</dbReference>
<dbReference type="GO" id="GO:0043531">
    <property type="term" value="F:ADP binding"/>
    <property type="evidence" value="ECO:0007669"/>
    <property type="project" value="TreeGrafter"/>
</dbReference>
<dbReference type="GO" id="GO:0005524">
    <property type="term" value="F:ATP binding"/>
    <property type="evidence" value="ECO:0007669"/>
    <property type="project" value="UniProtKB-KW"/>
</dbReference>
<dbReference type="GO" id="GO:0004618">
    <property type="term" value="F:phosphoglycerate kinase activity"/>
    <property type="evidence" value="ECO:0007669"/>
    <property type="project" value="UniProtKB-UniRule"/>
</dbReference>
<dbReference type="GO" id="GO:0006094">
    <property type="term" value="P:gluconeogenesis"/>
    <property type="evidence" value="ECO:0007669"/>
    <property type="project" value="TreeGrafter"/>
</dbReference>
<dbReference type="GO" id="GO:0006096">
    <property type="term" value="P:glycolytic process"/>
    <property type="evidence" value="ECO:0007669"/>
    <property type="project" value="UniProtKB-UniRule"/>
</dbReference>
<dbReference type="CDD" id="cd00318">
    <property type="entry name" value="Phosphoglycerate_kinase"/>
    <property type="match status" value="1"/>
</dbReference>
<dbReference type="FunFam" id="3.40.50.1260:FF:000001">
    <property type="entry name" value="Phosphoglycerate kinase"/>
    <property type="match status" value="1"/>
</dbReference>
<dbReference type="FunFam" id="3.40.50.1260:FF:000002">
    <property type="entry name" value="Phosphoglycerate kinase"/>
    <property type="match status" value="1"/>
</dbReference>
<dbReference type="Gene3D" id="3.40.50.1260">
    <property type="entry name" value="Phosphoglycerate kinase, N-terminal domain"/>
    <property type="match status" value="2"/>
</dbReference>
<dbReference type="HAMAP" id="MF_00145">
    <property type="entry name" value="Phosphoglyc_kinase"/>
    <property type="match status" value="1"/>
</dbReference>
<dbReference type="InterPro" id="IPR001576">
    <property type="entry name" value="Phosphoglycerate_kinase"/>
</dbReference>
<dbReference type="InterPro" id="IPR015911">
    <property type="entry name" value="Phosphoglycerate_kinase_CS"/>
</dbReference>
<dbReference type="InterPro" id="IPR015824">
    <property type="entry name" value="Phosphoglycerate_kinase_N"/>
</dbReference>
<dbReference type="InterPro" id="IPR036043">
    <property type="entry name" value="Phosphoglycerate_kinase_sf"/>
</dbReference>
<dbReference type="PANTHER" id="PTHR11406">
    <property type="entry name" value="PHOSPHOGLYCERATE KINASE"/>
    <property type="match status" value="1"/>
</dbReference>
<dbReference type="PANTHER" id="PTHR11406:SF23">
    <property type="entry name" value="PHOSPHOGLYCERATE KINASE 1, CHLOROPLASTIC-RELATED"/>
    <property type="match status" value="1"/>
</dbReference>
<dbReference type="Pfam" id="PF00162">
    <property type="entry name" value="PGK"/>
    <property type="match status" value="1"/>
</dbReference>
<dbReference type="PIRSF" id="PIRSF000724">
    <property type="entry name" value="Pgk"/>
    <property type="match status" value="1"/>
</dbReference>
<dbReference type="PRINTS" id="PR00477">
    <property type="entry name" value="PHGLYCKINASE"/>
</dbReference>
<dbReference type="SUPFAM" id="SSF53748">
    <property type="entry name" value="Phosphoglycerate kinase"/>
    <property type="match status" value="1"/>
</dbReference>
<dbReference type="PROSITE" id="PS00111">
    <property type="entry name" value="PGLYCERATE_KINASE"/>
    <property type="match status" value="1"/>
</dbReference>
<protein>
    <recommendedName>
        <fullName evidence="1">Phosphoglycerate kinase</fullName>
        <ecNumber evidence="1">2.7.2.3</ecNumber>
    </recommendedName>
</protein>
<name>PGK_BACMK</name>
<sequence>MNKKSIRDVDLKGKRVFCRVDFNVPMKEGKITDETRIRAALPTIQYLIEQGAKVILASHLGRPKGQAVEELRLTPVAARLGELLGKDVKKADEAFGPVAQEMVAAMNEGDVLVLENVRFYAGEEKNDAELAKEFAALADIFVNDAFGAAHRAHASTAGIADYLPAVSGLLMEKELDVLGKALSNPERPFTAIIGGAKVKDKIGVIRHLLDKVDNLIIGGGLAYTFVKALGHEIGLSLCENDKIELAKEFMQLAKEKGVNFYMPVDVVITEEFSETATTQIVGIDSIPSTWEGVDIGPKTREIYADVIKNSKLVVWNGPMGVFEMTPFAEGTKAVGQALADAEDTYSVIGGGDSAAAVEKFGMADKMSHISTGGGASLEFMEGKELPGVVCLNDK</sequence>
<reference key="1">
    <citation type="journal article" date="2008" name="Chem. Biol. Interact.">
        <title>Extending the Bacillus cereus group genomics to putative food-borne pathogens of different toxicity.</title>
        <authorList>
            <person name="Lapidus A."/>
            <person name="Goltsman E."/>
            <person name="Auger S."/>
            <person name="Galleron N."/>
            <person name="Segurens B."/>
            <person name="Dossat C."/>
            <person name="Land M.L."/>
            <person name="Broussolle V."/>
            <person name="Brillard J."/>
            <person name="Guinebretiere M.-H."/>
            <person name="Sanchis V."/>
            <person name="Nguen-the C."/>
            <person name="Lereclus D."/>
            <person name="Richardson P."/>
            <person name="Wincker P."/>
            <person name="Weissenbach J."/>
            <person name="Ehrlich S.D."/>
            <person name="Sorokin A."/>
        </authorList>
    </citation>
    <scope>NUCLEOTIDE SEQUENCE [LARGE SCALE GENOMIC DNA]</scope>
    <source>
        <strain>KBAB4</strain>
    </source>
</reference>